<gene>
    <name evidence="1" type="primary">atpA</name>
    <name type="ordered locus">PM1492</name>
</gene>
<sequence>MQLNSTEISELIKKRIAQFDVVSEARNTGTIVSVSDGIIRIHGLSEVMQGEMIALPGNRYAMALNLERDSVGAVVMGPYADLAEGMEVQCTGRILEVPVGRGLLGRVVNTLGEPIDGKGEIENDGFSPVEVIAPGVIDRKSVDQPVQTGYKAVDSMVPIGRGQRELIIGDRQTGKTALAIDAIINQRDSGIKCIYVAIGQKASTIANVVRKLEEHSALQNTIVVVASASESAALQYLAPYSGCAMGEYFRDRGEDALIIYDDLSKQAVAYRQISLLLRRPPGREAFPGDVFYLHSRLLERASRVNEEYVERFTNGEVKGKTGSLTALPIIETQAGDVSAFVPTNVISITDGQIFLESNLFNSGIRPAVNPGISVSRVGGSAQTKVIKKLAGGIRTALAQYRELAAFAQFASDLDDATRKQLSHGQKVTELLKQKQYSPLSVAQQALVLFAVEFGYLEEVDLDRIGSFESALLEYANHNYADFMRELTQSGNYNDEIKESLKGILDSFKANSAW</sequence>
<feature type="chain" id="PRO_0000144342" description="ATP synthase subunit alpha">
    <location>
        <begin position="1"/>
        <end position="513"/>
    </location>
</feature>
<feature type="binding site" evidence="1">
    <location>
        <begin position="169"/>
        <end position="176"/>
    </location>
    <ligand>
        <name>ATP</name>
        <dbReference type="ChEBI" id="CHEBI:30616"/>
    </ligand>
</feature>
<feature type="site" description="Required for activity" evidence="1">
    <location>
        <position position="373"/>
    </location>
</feature>
<name>ATPA_PASMU</name>
<proteinExistence type="inferred from homology"/>
<organism>
    <name type="scientific">Pasteurella multocida (strain Pm70)</name>
    <dbReference type="NCBI Taxonomy" id="272843"/>
    <lineage>
        <taxon>Bacteria</taxon>
        <taxon>Pseudomonadati</taxon>
        <taxon>Pseudomonadota</taxon>
        <taxon>Gammaproteobacteria</taxon>
        <taxon>Pasteurellales</taxon>
        <taxon>Pasteurellaceae</taxon>
        <taxon>Pasteurella</taxon>
    </lineage>
</organism>
<reference key="1">
    <citation type="journal article" date="2001" name="Proc. Natl. Acad. Sci. U.S.A.">
        <title>Complete genomic sequence of Pasteurella multocida Pm70.</title>
        <authorList>
            <person name="May B.J."/>
            <person name="Zhang Q."/>
            <person name="Li L.L."/>
            <person name="Paustian M.L."/>
            <person name="Whittam T.S."/>
            <person name="Kapur V."/>
        </authorList>
    </citation>
    <scope>NUCLEOTIDE SEQUENCE [LARGE SCALE GENOMIC DNA]</scope>
    <source>
        <strain>Pm70</strain>
    </source>
</reference>
<comment type="function">
    <text evidence="1">Produces ATP from ADP in the presence of a proton gradient across the membrane. The alpha chain is a regulatory subunit.</text>
</comment>
<comment type="catalytic activity">
    <reaction evidence="1">
        <text>ATP + H2O + 4 H(+)(in) = ADP + phosphate + 5 H(+)(out)</text>
        <dbReference type="Rhea" id="RHEA:57720"/>
        <dbReference type="ChEBI" id="CHEBI:15377"/>
        <dbReference type="ChEBI" id="CHEBI:15378"/>
        <dbReference type="ChEBI" id="CHEBI:30616"/>
        <dbReference type="ChEBI" id="CHEBI:43474"/>
        <dbReference type="ChEBI" id="CHEBI:456216"/>
        <dbReference type="EC" id="7.1.2.2"/>
    </reaction>
</comment>
<comment type="subunit">
    <text evidence="1">F-type ATPases have 2 components, CF(1) - the catalytic core - and CF(0) - the membrane proton channel. CF(1) has five subunits: alpha(3), beta(3), gamma(1), delta(1), epsilon(1). CF(0) has three main subunits: a(1), b(2) and c(9-12). The alpha and beta chains form an alternating ring which encloses part of the gamma chain. CF(1) is attached to CF(0) by a central stalk formed by the gamma and epsilon chains, while a peripheral stalk is formed by the delta and b chains.</text>
</comment>
<comment type="subcellular location">
    <subcellularLocation>
        <location evidence="1">Cell inner membrane</location>
        <topology evidence="1">Peripheral membrane protein</topology>
    </subcellularLocation>
</comment>
<comment type="similarity">
    <text evidence="1">Belongs to the ATPase alpha/beta chains family.</text>
</comment>
<keyword id="KW-0066">ATP synthesis</keyword>
<keyword id="KW-0067">ATP-binding</keyword>
<keyword id="KW-0997">Cell inner membrane</keyword>
<keyword id="KW-1003">Cell membrane</keyword>
<keyword id="KW-0139">CF(1)</keyword>
<keyword id="KW-0375">Hydrogen ion transport</keyword>
<keyword id="KW-0406">Ion transport</keyword>
<keyword id="KW-0472">Membrane</keyword>
<keyword id="KW-0547">Nucleotide-binding</keyword>
<keyword id="KW-1185">Reference proteome</keyword>
<keyword id="KW-1278">Translocase</keyword>
<keyword id="KW-0813">Transport</keyword>
<dbReference type="EC" id="7.1.2.2" evidence="1"/>
<dbReference type="EMBL" id="AE004439">
    <property type="protein sequence ID" value="AAK03576.1"/>
    <property type="molecule type" value="Genomic_DNA"/>
</dbReference>
<dbReference type="RefSeq" id="WP_010907192.1">
    <property type="nucleotide sequence ID" value="NC_002663.1"/>
</dbReference>
<dbReference type="SMR" id="Q9CKW2"/>
<dbReference type="STRING" id="272843.PM1492"/>
<dbReference type="EnsemblBacteria" id="AAK03576">
    <property type="protein sequence ID" value="AAK03576"/>
    <property type="gene ID" value="PM1492"/>
</dbReference>
<dbReference type="KEGG" id="pmu:PM1492"/>
<dbReference type="PATRIC" id="fig|272843.6.peg.1507"/>
<dbReference type="HOGENOM" id="CLU_010091_2_1_6"/>
<dbReference type="OrthoDB" id="9803053at2"/>
<dbReference type="Proteomes" id="UP000000809">
    <property type="component" value="Chromosome"/>
</dbReference>
<dbReference type="GO" id="GO:0005886">
    <property type="term" value="C:plasma membrane"/>
    <property type="evidence" value="ECO:0007669"/>
    <property type="project" value="UniProtKB-SubCell"/>
</dbReference>
<dbReference type="GO" id="GO:0045259">
    <property type="term" value="C:proton-transporting ATP synthase complex"/>
    <property type="evidence" value="ECO:0007669"/>
    <property type="project" value="UniProtKB-KW"/>
</dbReference>
<dbReference type="GO" id="GO:0043531">
    <property type="term" value="F:ADP binding"/>
    <property type="evidence" value="ECO:0007669"/>
    <property type="project" value="TreeGrafter"/>
</dbReference>
<dbReference type="GO" id="GO:0005524">
    <property type="term" value="F:ATP binding"/>
    <property type="evidence" value="ECO:0007669"/>
    <property type="project" value="UniProtKB-UniRule"/>
</dbReference>
<dbReference type="GO" id="GO:0046933">
    <property type="term" value="F:proton-transporting ATP synthase activity, rotational mechanism"/>
    <property type="evidence" value="ECO:0007669"/>
    <property type="project" value="UniProtKB-UniRule"/>
</dbReference>
<dbReference type="CDD" id="cd18113">
    <property type="entry name" value="ATP-synt_F1_alpha_C"/>
    <property type="match status" value="1"/>
</dbReference>
<dbReference type="CDD" id="cd18116">
    <property type="entry name" value="ATP-synt_F1_alpha_N"/>
    <property type="match status" value="1"/>
</dbReference>
<dbReference type="CDD" id="cd01132">
    <property type="entry name" value="F1-ATPase_alpha_CD"/>
    <property type="match status" value="1"/>
</dbReference>
<dbReference type="FunFam" id="1.20.150.20:FF:000001">
    <property type="entry name" value="ATP synthase subunit alpha"/>
    <property type="match status" value="1"/>
</dbReference>
<dbReference type="FunFam" id="2.40.30.20:FF:000001">
    <property type="entry name" value="ATP synthase subunit alpha"/>
    <property type="match status" value="1"/>
</dbReference>
<dbReference type="FunFam" id="3.40.50.300:FF:000002">
    <property type="entry name" value="ATP synthase subunit alpha"/>
    <property type="match status" value="1"/>
</dbReference>
<dbReference type="Gene3D" id="2.40.30.20">
    <property type="match status" value="1"/>
</dbReference>
<dbReference type="Gene3D" id="1.20.150.20">
    <property type="entry name" value="ATP synthase alpha/beta chain, C-terminal domain"/>
    <property type="match status" value="1"/>
</dbReference>
<dbReference type="Gene3D" id="3.40.50.300">
    <property type="entry name" value="P-loop containing nucleotide triphosphate hydrolases"/>
    <property type="match status" value="1"/>
</dbReference>
<dbReference type="HAMAP" id="MF_01346">
    <property type="entry name" value="ATP_synth_alpha_bact"/>
    <property type="match status" value="1"/>
</dbReference>
<dbReference type="InterPro" id="IPR023366">
    <property type="entry name" value="ATP_synth_asu-like_sf"/>
</dbReference>
<dbReference type="InterPro" id="IPR000793">
    <property type="entry name" value="ATP_synth_asu_C"/>
</dbReference>
<dbReference type="InterPro" id="IPR038376">
    <property type="entry name" value="ATP_synth_asu_C_sf"/>
</dbReference>
<dbReference type="InterPro" id="IPR033732">
    <property type="entry name" value="ATP_synth_F1_a_nt-bd_dom"/>
</dbReference>
<dbReference type="InterPro" id="IPR005294">
    <property type="entry name" value="ATP_synth_F1_asu"/>
</dbReference>
<dbReference type="InterPro" id="IPR020003">
    <property type="entry name" value="ATPase_a/bsu_AS"/>
</dbReference>
<dbReference type="InterPro" id="IPR004100">
    <property type="entry name" value="ATPase_F1/V1/A1_a/bsu_N"/>
</dbReference>
<dbReference type="InterPro" id="IPR036121">
    <property type="entry name" value="ATPase_F1/V1/A1_a/bsu_N_sf"/>
</dbReference>
<dbReference type="InterPro" id="IPR000194">
    <property type="entry name" value="ATPase_F1/V1/A1_a/bsu_nucl-bd"/>
</dbReference>
<dbReference type="InterPro" id="IPR027417">
    <property type="entry name" value="P-loop_NTPase"/>
</dbReference>
<dbReference type="NCBIfam" id="TIGR00962">
    <property type="entry name" value="atpA"/>
    <property type="match status" value="1"/>
</dbReference>
<dbReference type="NCBIfam" id="NF009884">
    <property type="entry name" value="PRK13343.1"/>
    <property type="match status" value="1"/>
</dbReference>
<dbReference type="PANTHER" id="PTHR48082">
    <property type="entry name" value="ATP SYNTHASE SUBUNIT ALPHA, MITOCHONDRIAL"/>
    <property type="match status" value="1"/>
</dbReference>
<dbReference type="PANTHER" id="PTHR48082:SF2">
    <property type="entry name" value="ATP SYNTHASE SUBUNIT ALPHA, MITOCHONDRIAL"/>
    <property type="match status" value="1"/>
</dbReference>
<dbReference type="Pfam" id="PF00006">
    <property type="entry name" value="ATP-synt_ab"/>
    <property type="match status" value="1"/>
</dbReference>
<dbReference type="Pfam" id="PF00306">
    <property type="entry name" value="ATP-synt_ab_C"/>
    <property type="match status" value="1"/>
</dbReference>
<dbReference type="Pfam" id="PF02874">
    <property type="entry name" value="ATP-synt_ab_N"/>
    <property type="match status" value="1"/>
</dbReference>
<dbReference type="SUPFAM" id="SSF47917">
    <property type="entry name" value="C-terminal domain of alpha and beta subunits of F1 ATP synthase"/>
    <property type="match status" value="1"/>
</dbReference>
<dbReference type="SUPFAM" id="SSF50615">
    <property type="entry name" value="N-terminal domain of alpha and beta subunits of F1 ATP synthase"/>
    <property type="match status" value="1"/>
</dbReference>
<dbReference type="SUPFAM" id="SSF52540">
    <property type="entry name" value="P-loop containing nucleoside triphosphate hydrolases"/>
    <property type="match status" value="1"/>
</dbReference>
<dbReference type="PROSITE" id="PS00152">
    <property type="entry name" value="ATPASE_ALPHA_BETA"/>
    <property type="match status" value="1"/>
</dbReference>
<accession>Q9CKW2</accession>
<protein>
    <recommendedName>
        <fullName evidence="1">ATP synthase subunit alpha</fullName>
        <ecNumber evidence="1">7.1.2.2</ecNumber>
    </recommendedName>
    <alternativeName>
        <fullName evidence="1">ATP synthase F1 sector subunit alpha</fullName>
    </alternativeName>
    <alternativeName>
        <fullName evidence="1">F-ATPase subunit alpha</fullName>
    </alternativeName>
</protein>
<evidence type="ECO:0000255" key="1">
    <source>
        <dbReference type="HAMAP-Rule" id="MF_01346"/>
    </source>
</evidence>